<dbReference type="EC" id="1.1.1.38" evidence="1"/>
<dbReference type="EMBL" id="AP008232">
    <property type="protein sequence ID" value="BAE74242.1"/>
    <property type="molecule type" value="Genomic_DNA"/>
</dbReference>
<dbReference type="RefSeq" id="WP_011410828.1">
    <property type="nucleotide sequence ID" value="NC_007712.1"/>
</dbReference>
<dbReference type="SMR" id="Q2NUD3"/>
<dbReference type="STRING" id="343509.SG0967"/>
<dbReference type="KEGG" id="sgl:SG0967"/>
<dbReference type="eggNOG" id="COG0281">
    <property type="taxonomic scope" value="Bacteria"/>
</dbReference>
<dbReference type="HOGENOM" id="CLU_011405_5_2_6"/>
<dbReference type="OrthoDB" id="3314528at2"/>
<dbReference type="Proteomes" id="UP000001932">
    <property type="component" value="Chromosome"/>
</dbReference>
<dbReference type="GO" id="GO:0005829">
    <property type="term" value="C:cytosol"/>
    <property type="evidence" value="ECO:0007669"/>
    <property type="project" value="TreeGrafter"/>
</dbReference>
<dbReference type="GO" id="GO:0004471">
    <property type="term" value="F:malate dehydrogenase (decarboxylating) (NAD+) activity"/>
    <property type="evidence" value="ECO:0007669"/>
    <property type="project" value="UniProtKB-UniRule"/>
</dbReference>
<dbReference type="GO" id="GO:0046872">
    <property type="term" value="F:metal ion binding"/>
    <property type="evidence" value="ECO:0007669"/>
    <property type="project" value="UniProtKB-KW"/>
</dbReference>
<dbReference type="GO" id="GO:0051287">
    <property type="term" value="F:NAD binding"/>
    <property type="evidence" value="ECO:0007669"/>
    <property type="project" value="InterPro"/>
</dbReference>
<dbReference type="GO" id="GO:0008948">
    <property type="term" value="F:oxaloacetate decarboxylase activity"/>
    <property type="evidence" value="ECO:0007669"/>
    <property type="project" value="UniProtKB-UniRule"/>
</dbReference>
<dbReference type="GO" id="GO:0006108">
    <property type="term" value="P:malate metabolic process"/>
    <property type="evidence" value="ECO:0007669"/>
    <property type="project" value="TreeGrafter"/>
</dbReference>
<dbReference type="CDD" id="cd05312">
    <property type="entry name" value="NAD_bind_1_malic_enz"/>
    <property type="match status" value="1"/>
</dbReference>
<dbReference type="FunFam" id="3.40.50.10380:FF:000001">
    <property type="entry name" value="NAD-dependent malic enzyme"/>
    <property type="match status" value="1"/>
</dbReference>
<dbReference type="FunFam" id="3.40.50.720:FF:000055">
    <property type="entry name" value="NAD-dependent malic enzyme"/>
    <property type="match status" value="1"/>
</dbReference>
<dbReference type="Gene3D" id="3.40.50.10380">
    <property type="entry name" value="Malic enzyme, N-terminal domain"/>
    <property type="match status" value="1"/>
</dbReference>
<dbReference type="Gene3D" id="3.40.50.720">
    <property type="entry name" value="NAD(P)-binding Rossmann-like Domain"/>
    <property type="match status" value="1"/>
</dbReference>
<dbReference type="HAMAP" id="MF_01619">
    <property type="entry name" value="NAD_malic_enz"/>
    <property type="match status" value="1"/>
</dbReference>
<dbReference type="InterPro" id="IPR046346">
    <property type="entry name" value="Aminoacid_DH-like_N_sf"/>
</dbReference>
<dbReference type="InterPro" id="IPR015884">
    <property type="entry name" value="Malic_enzyme_CS"/>
</dbReference>
<dbReference type="InterPro" id="IPR012301">
    <property type="entry name" value="Malic_N_dom"/>
</dbReference>
<dbReference type="InterPro" id="IPR037062">
    <property type="entry name" value="Malic_N_dom_sf"/>
</dbReference>
<dbReference type="InterPro" id="IPR012302">
    <property type="entry name" value="Malic_NAD-bd"/>
</dbReference>
<dbReference type="InterPro" id="IPR001891">
    <property type="entry name" value="Malic_OxRdtase"/>
</dbReference>
<dbReference type="InterPro" id="IPR036291">
    <property type="entry name" value="NAD(P)-bd_dom_sf"/>
</dbReference>
<dbReference type="InterPro" id="IPR023667">
    <property type="entry name" value="NAD_malic_enz_proteobac"/>
</dbReference>
<dbReference type="NCBIfam" id="NF010052">
    <property type="entry name" value="PRK13529.1"/>
    <property type="match status" value="1"/>
</dbReference>
<dbReference type="PANTHER" id="PTHR23406">
    <property type="entry name" value="MALIC ENZYME-RELATED"/>
    <property type="match status" value="1"/>
</dbReference>
<dbReference type="PANTHER" id="PTHR23406:SF34">
    <property type="entry name" value="NAD-DEPENDENT MALIC ENZYME, MITOCHONDRIAL"/>
    <property type="match status" value="1"/>
</dbReference>
<dbReference type="Pfam" id="PF00390">
    <property type="entry name" value="malic"/>
    <property type="match status" value="1"/>
</dbReference>
<dbReference type="Pfam" id="PF03949">
    <property type="entry name" value="Malic_M"/>
    <property type="match status" value="1"/>
</dbReference>
<dbReference type="PIRSF" id="PIRSF000106">
    <property type="entry name" value="ME"/>
    <property type="match status" value="1"/>
</dbReference>
<dbReference type="PRINTS" id="PR00072">
    <property type="entry name" value="MALOXRDTASE"/>
</dbReference>
<dbReference type="SMART" id="SM01274">
    <property type="entry name" value="malic"/>
    <property type="match status" value="1"/>
</dbReference>
<dbReference type="SMART" id="SM00919">
    <property type="entry name" value="Malic_M"/>
    <property type="match status" value="1"/>
</dbReference>
<dbReference type="SUPFAM" id="SSF53223">
    <property type="entry name" value="Aminoacid dehydrogenase-like, N-terminal domain"/>
    <property type="match status" value="1"/>
</dbReference>
<dbReference type="SUPFAM" id="SSF51735">
    <property type="entry name" value="NAD(P)-binding Rossmann-fold domains"/>
    <property type="match status" value="1"/>
</dbReference>
<dbReference type="PROSITE" id="PS00331">
    <property type="entry name" value="MALIC_ENZYMES"/>
    <property type="match status" value="1"/>
</dbReference>
<proteinExistence type="inferred from homology"/>
<organism>
    <name type="scientific">Sodalis glossinidius (strain morsitans)</name>
    <dbReference type="NCBI Taxonomy" id="343509"/>
    <lineage>
        <taxon>Bacteria</taxon>
        <taxon>Pseudomonadati</taxon>
        <taxon>Pseudomonadota</taxon>
        <taxon>Gammaproteobacteria</taxon>
        <taxon>Enterobacterales</taxon>
        <taxon>Bruguierivoracaceae</taxon>
        <taxon>Sodalis</taxon>
    </lineage>
</organism>
<accession>Q2NUD3</accession>
<reference key="1">
    <citation type="journal article" date="2006" name="Genome Res.">
        <title>Massive genome erosion and functional adaptations provide insights into the symbiotic lifestyle of Sodalis glossinidius in the tsetse host.</title>
        <authorList>
            <person name="Toh H."/>
            <person name="Weiss B.L."/>
            <person name="Perkin S.A.H."/>
            <person name="Yamashita A."/>
            <person name="Oshima K."/>
            <person name="Hattori M."/>
            <person name="Aksoy S."/>
        </authorList>
    </citation>
    <scope>NUCLEOTIDE SEQUENCE [LARGE SCALE GENOMIC DNA]</scope>
    <source>
        <strain>morsitans</strain>
    </source>
</reference>
<sequence>MELEYESKRPLYIPHAGPILLEFPLLNKGSAFSLEERDNFNLQGLLPDTVETIEEQAERAWRQYQDFRTNIDRHIYLRNIQDTNETLFYRLLAAHLAEMLPIIYTPTVGDACERFSDIYRRARGVFISYNNCDKIEDMLQNATKQNVKVIVVTDGERILGLGDQGIGGMGIPIGKLSLYTACGGISPAYTLPVVLDAGTNNQQLLNDPLYMGWRHPRITGEQYDKFVDAFIQAVKRRWPNVLLQFEDFAQKNATPLLNRYRSELCCFNDDIQGTAAVTLGCLLAASRAAGKRLRDQKVVFLGAGSAGCGIAEQITAEMRTEGLSEDEARRRVLMVDRFGLLTDKLANLLDFQSRLVQPSDSLSDWQLDSDTISLQDVVRNARPTVLIGVSGQPGLFTEEIIRDMHQHCERPIVMPLSNPTSRVEATPEDLLRWTDGAALVATGSPFAPVQFEGKTYPIAQCNNAYIFPGIGLGVLASGAGQITDAMLIAASRALADCSPLANGDGGALLPDINDIQSVSRVIAMAVAKAAQVHGVALVTSEETLSLAIEHNFWQPQYRDYRRTSF</sequence>
<gene>
    <name evidence="1" type="primary">maeA</name>
    <name type="ordered locus">SG0967</name>
</gene>
<name>MAO1_SODGM</name>
<evidence type="ECO:0000255" key="1">
    <source>
        <dbReference type="HAMAP-Rule" id="MF_01619"/>
    </source>
</evidence>
<keyword id="KW-0479">Metal-binding</keyword>
<keyword id="KW-0520">NAD</keyword>
<keyword id="KW-0560">Oxidoreductase</keyword>
<feature type="chain" id="PRO_1000069550" description="NAD-dependent malic enzyme">
    <location>
        <begin position="1"/>
        <end position="565"/>
    </location>
</feature>
<feature type="active site" description="Proton donor" evidence="1">
    <location>
        <position position="104"/>
    </location>
</feature>
<feature type="active site" description="Proton acceptor" evidence="1">
    <location>
        <position position="175"/>
    </location>
</feature>
<feature type="binding site" evidence="1">
    <location>
        <position position="157"/>
    </location>
    <ligand>
        <name>NAD(+)</name>
        <dbReference type="ChEBI" id="CHEBI:57540"/>
    </ligand>
</feature>
<feature type="binding site" evidence="1">
    <location>
        <position position="246"/>
    </location>
    <ligand>
        <name>a divalent metal cation</name>
        <dbReference type="ChEBI" id="CHEBI:60240"/>
    </ligand>
</feature>
<feature type="binding site" evidence="1">
    <location>
        <position position="247"/>
    </location>
    <ligand>
        <name>a divalent metal cation</name>
        <dbReference type="ChEBI" id="CHEBI:60240"/>
    </ligand>
</feature>
<feature type="binding site" evidence="1">
    <location>
        <position position="270"/>
    </location>
    <ligand>
        <name>a divalent metal cation</name>
        <dbReference type="ChEBI" id="CHEBI:60240"/>
    </ligand>
</feature>
<feature type="binding site" evidence="1">
    <location>
        <position position="270"/>
    </location>
    <ligand>
        <name>NAD(+)</name>
        <dbReference type="ChEBI" id="CHEBI:57540"/>
    </ligand>
</feature>
<feature type="binding site" evidence="1">
    <location>
        <position position="418"/>
    </location>
    <ligand>
        <name>NAD(+)</name>
        <dbReference type="ChEBI" id="CHEBI:57540"/>
    </ligand>
</feature>
<feature type="site" description="Important for activity" evidence="1">
    <location>
        <position position="270"/>
    </location>
</feature>
<comment type="catalytic activity">
    <reaction evidence="1">
        <text>(S)-malate + NAD(+) = pyruvate + CO2 + NADH</text>
        <dbReference type="Rhea" id="RHEA:12653"/>
        <dbReference type="ChEBI" id="CHEBI:15361"/>
        <dbReference type="ChEBI" id="CHEBI:15589"/>
        <dbReference type="ChEBI" id="CHEBI:16526"/>
        <dbReference type="ChEBI" id="CHEBI:57540"/>
        <dbReference type="ChEBI" id="CHEBI:57945"/>
        <dbReference type="EC" id="1.1.1.38"/>
    </reaction>
</comment>
<comment type="catalytic activity">
    <reaction evidence="1">
        <text>oxaloacetate + H(+) = pyruvate + CO2</text>
        <dbReference type="Rhea" id="RHEA:15641"/>
        <dbReference type="ChEBI" id="CHEBI:15361"/>
        <dbReference type="ChEBI" id="CHEBI:15378"/>
        <dbReference type="ChEBI" id="CHEBI:16452"/>
        <dbReference type="ChEBI" id="CHEBI:16526"/>
        <dbReference type="EC" id="1.1.1.38"/>
    </reaction>
</comment>
<comment type="cofactor">
    <cofactor evidence="1">
        <name>Mg(2+)</name>
        <dbReference type="ChEBI" id="CHEBI:18420"/>
    </cofactor>
    <cofactor evidence="1">
        <name>Mn(2+)</name>
        <dbReference type="ChEBI" id="CHEBI:29035"/>
    </cofactor>
    <text evidence="1">Divalent metal cations. Prefers magnesium or manganese.</text>
</comment>
<comment type="subunit">
    <text evidence="1">Homotetramer.</text>
</comment>
<comment type="similarity">
    <text evidence="1">Belongs to the malic enzymes family.</text>
</comment>
<protein>
    <recommendedName>
        <fullName evidence="1">NAD-dependent malic enzyme</fullName>
        <shortName evidence="1">NAD-ME</shortName>
        <ecNumber evidence="1">1.1.1.38</ecNumber>
    </recommendedName>
</protein>